<sequence length="342" mass="36446">MIRADLTDIPTYVPGKNLGDALKLSSNEVAFPPLPAAVSAITEAATGANRYPDMGAVELRGVLADHLELTPEQITVGCGSSALCQQLVQATCAAGDEVIFPWRSFEAYPIFARVAGATAVPIPLLPDTQGHDLEGMLDAITDRTRLIFLCNPNNPSGTTFTEEQFEAFMQRVPADVVVGLDEAYFEFNRAEDSPVSTEAVQRYPNVIGLRTFSKAYGLAGVRVGYAFGNPELIGAMNKVAIPFAVSSLAQAAAIASLNAADELLERTEEVVTERERVAQVVGAAPSQANFVWLPGEGAAELAGRLAEHGVVIRAFPEGARITVTNAAETDRLIRAWEAVHHG</sequence>
<dbReference type="EC" id="2.6.1.57" evidence="1"/>
<dbReference type="EMBL" id="BA000035">
    <property type="protein sequence ID" value="BAC17003.1"/>
    <property type="status" value="ALT_INIT"/>
    <property type="molecule type" value="Genomic_DNA"/>
</dbReference>
<dbReference type="RefSeq" id="WP_143758384.1">
    <property type="nucleotide sequence ID" value="NC_004369.1"/>
</dbReference>
<dbReference type="SMR" id="Q8FU28"/>
<dbReference type="STRING" id="196164.gene:10740584"/>
<dbReference type="KEGG" id="cef:CE0193"/>
<dbReference type="eggNOG" id="COG0079">
    <property type="taxonomic scope" value="Bacteria"/>
</dbReference>
<dbReference type="HOGENOM" id="CLU_017584_3_3_11"/>
<dbReference type="OrthoDB" id="9809616at2"/>
<dbReference type="Proteomes" id="UP000001409">
    <property type="component" value="Chromosome"/>
</dbReference>
<dbReference type="GO" id="GO:0008793">
    <property type="term" value="F:aromatic-amino-acid transaminase activity"/>
    <property type="evidence" value="ECO:0007669"/>
    <property type="project" value="UniProtKB-UniRule"/>
</dbReference>
<dbReference type="GO" id="GO:0004400">
    <property type="term" value="F:histidinol-phosphate transaminase activity"/>
    <property type="evidence" value="ECO:0007669"/>
    <property type="project" value="InterPro"/>
</dbReference>
<dbReference type="GO" id="GO:0030170">
    <property type="term" value="F:pyridoxal phosphate binding"/>
    <property type="evidence" value="ECO:0007669"/>
    <property type="project" value="UniProtKB-UniRule"/>
</dbReference>
<dbReference type="GO" id="GO:0000105">
    <property type="term" value="P:L-histidine biosynthetic process"/>
    <property type="evidence" value="ECO:0007669"/>
    <property type="project" value="InterPro"/>
</dbReference>
<dbReference type="CDD" id="cd00609">
    <property type="entry name" value="AAT_like"/>
    <property type="match status" value="1"/>
</dbReference>
<dbReference type="Gene3D" id="3.90.1150.10">
    <property type="entry name" value="Aspartate Aminotransferase, domain 1"/>
    <property type="match status" value="1"/>
</dbReference>
<dbReference type="Gene3D" id="3.40.640.10">
    <property type="entry name" value="Type I PLP-dependent aspartate aminotransferase-like (Major domain)"/>
    <property type="match status" value="1"/>
</dbReference>
<dbReference type="HAMAP" id="MF_01023">
    <property type="entry name" value="HisC_aminotrans_2"/>
    <property type="match status" value="1"/>
</dbReference>
<dbReference type="HAMAP" id="MF_01513">
    <property type="entry name" value="Phe_aminotrans_2"/>
    <property type="match status" value="1"/>
</dbReference>
<dbReference type="InterPro" id="IPR001917">
    <property type="entry name" value="Aminotrans_II_pyridoxalP_BS"/>
</dbReference>
<dbReference type="InterPro" id="IPR004839">
    <property type="entry name" value="Aminotransferase_I/II_large"/>
</dbReference>
<dbReference type="InterPro" id="IPR024892">
    <property type="entry name" value="ArAT"/>
</dbReference>
<dbReference type="InterPro" id="IPR005861">
    <property type="entry name" value="HisP_aminotrans"/>
</dbReference>
<dbReference type="InterPro" id="IPR050106">
    <property type="entry name" value="HistidinolP_aminotransfase"/>
</dbReference>
<dbReference type="InterPro" id="IPR015424">
    <property type="entry name" value="PyrdxlP-dep_Trfase"/>
</dbReference>
<dbReference type="InterPro" id="IPR015421">
    <property type="entry name" value="PyrdxlP-dep_Trfase_major"/>
</dbReference>
<dbReference type="InterPro" id="IPR015422">
    <property type="entry name" value="PyrdxlP-dep_Trfase_small"/>
</dbReference>
<dbReference type="NCBIfam" id="TIGR01141">
    <property type="entry name" value="hisC"/>
    <property type="match status" value="1"/>
</dbReference>
<dbReference type="NCBIfam" id="NF002878">
    <property type="entry name" value="PRK03321.1"/>
    <property type="match status" value="1"/>
</dbReference>
<dbReference type="PANTHER" id="PTHR43643:SF3">
    <property type="entry name" value="HISTIDINOL-PHOSPHATE AMINOTRANSFERASE"/>
    <property type="match status" value="1"/>
</dbReference>
<dbReference type="PANTHER" id="PTHR43643">
    <property type="entry name" value="HISTIDINOL-PHOSPHATE AMINOTRANSFERASE 2"/>
    <property type="match status" value="1"/>
</dbReference>
<dbReference type="Pfam" id="PF00155">
    <property type="entry name" value="Aminotran_1_2"/>
    <property type="match status" value="1"/>
</dbReference>
<dbReference type="SUPFAM" id="SSF53383">
    <property type="entry name" value="PLP-dependent transferases"/>
    <property type="match status" value="1"/>
</dbReference>
<dbReference type="PROSITE" id="PS00599">
    <property type="entry name" value="AA_TRANSFER_CLASS_2"/>
    <property type="match status" value="1"/>
</dbReference>
<protein>
    <recommendedName>
        <fullName evidence="1">Aromatic amino acid aminotransferase</fullName>
        <shortName evidence="1">ArAT</shortName>
        <ecNumber evidence="1">2.6.1.57</ecNumber>
    </recommendedName>
</protein>
<comment type="function">
    <text evidence="1">Aminotransferase that catalyzes the conversion of aromatic amino acids and 2-oxoglutarate into corresponding aromatic oxo acids and L-glutamate.</text>
</comment>
<comment type="catalytic activity">
    <reaction evidence="1">
        <text>an aromatic L-alpha-amino acid + 2-oxoglutarate = an aromatic oxo-acid + L-glutamate</text>
        <dbReference type="Rhea" id="RHEA:17533"/>
        <dbReference type="ChEBI" id="CHEBI:16810"/>
        <dbReference type="ChEBI" id="CHEBI:29985"/>
        <dbReference type="ChEBI" id="CHEBI:73309"/>
        <dbReference type="ChEBI" id="CHEBI:84824"/>
        <dbReference type="EC" id="2.6.1.57"/>
    </reaction>
</comment>
<comment type="cofactor">
    <cofactor evidence="1">
        <name>pyridoxal 5'-phosphate</name>
        <dbReference type="ChEBI" id="CHEBI:597326"/>
    </cofactor>
</comment>
<comment type="subunit">
    <text evidence="1">Homodimer.</text>
</comment>
<comment type="similarity">
    <text evidence="1">Belongs to the class-II pyridoxal-phosphate-dependent aminotransferase family.</text>
</comment>
<comment type="sequence caution" evidence="2">
    <conflict type="erroneous initiation">
        <sequence resource="EMBL-CDS" id="BAC17003"/>
    </conflict>
    <text>Extended N-terminus.</text>
</comment>
<organism>
    <name type="scientific">Corynebacterium efficiens (strain DSM 44549 / YS-314 / AJ 12310 / JCM 11189 / NBRC 100395)</name>
    <dbReference type="NCBI Taxonomy" id="196164"/>
    <lineage>
        <taxon>Bacteria</taxon>
        <taxon>Bacillati</taxon>
        <taxon>Actinomycetota</taxon>
        <taxon>Actinomycetes</taxon>
        <taxon>Mycobacteriales</taxon>
        <taxon>Corynebacteriaceae</taxon>
        <taxon>Corynebacterium</taxon>
    </lineage>
</organism>
<keyword id="KW-0032">Aminotransferase</keyword>
<keyword id="KW-0663">Pyridoxal phosphate</keyword>
<keyword id="KW-1185">Reference proteome</keyword>
<keyword id="KW-0808">Transferase</keyword>
<reference key="1">
    <citation type="journal article" date="2003" name="Genome Res.">
        <title>Comparative complete genome sequence analysis of the amino acid replacements responsible for the thermostability of Corynebacterium efficiens.</title>
        <authorList>
            <person name="Nishio Y."/>
            <person name="Nakamura Y."/>
            <person name="Kawarabayasi Y."/>
            <person name="Usuda Y."/>
            <person name="Kimura E."/>
            <person name="Sugimoto S."/>
            <person name="Matsui K."/>
            <person name="Yamagishi A."/>
            <person name="Kikuchi H."/>
            <person name="Ikeo K."/>
            <person name="Gojobori T."/>
        </authorList>
    </citation>
    <scope>NUCLEOTIDE SEQUENCE [LARGE SCALE GENOMIC DNA]</scope>
    <source>
        <strain>DSM 44549 / YS-314 / AJ 12310 / JCM 11189 / NBRC 100395</strain>
    </source>
</reference>
<evidence type="ECO:0000255" key="1">
    <source>
        <dbReference type="HAMAP-Rule" id="MF_01513"/>
    </source>
</evidence>
<evidence type="ECO:0000305" key="2"/>
<proteinExistence type="inferred from homology"/>
<gene>
    <name evidence="1" type="primary">pat</name>
    <name type="ordered locus">CE0193</name>
</gene>
<accession>Q8FU28</accession>
<name>PATR_COREF</name>
<feature type="chain" id="PRO_0000153511" description="Aromatic amino acid aminotransferase">
    <location>
        <begin position="1"/>
        <end position="342"/>
    </location>
</feature>
<feature type="modified residue" description="N6-(pyridoxal phosphate)lysine" evidence="1">
    <location>
        <position position="214"/>
    </location>
</feature>